<keyword id="KW-0456">Lyase</keyword>
<keyword id="KW-0663">Pyridoxal phosphate</keyword>
<evidence type="ECO:0000255" key="1">
    <source>
        <dbReference type="HAMAP-Rule" id="MF_01045"/>
    </source>
</evidence>
<dbReference type="EC" id="4.4.1.15" evidence="1"/>
<dbReference type="EMBL" id="AE017220">
    <property type="protein sequence ID" value="AAX65863.1"/>
    <property type="molecule type" value="Genomic_DNA"/>
</dbReference>
<dbReference type="RefSeq" id="WP_001540272.1">
    <property type="nucleotide sequence ID" value="NC_006905.1"/>
</dbReference>
<dbReference type="SMR" id="Q57N48"/>
<dbReference type="KEGG" id="sec:SCH_1957"/>
<dbReference type="HOGENOM" id="CLU_048897_1_0_6"/>
<dbReference type="Proteomes" id="UP000000538">
    <property type="component" value="Chromosome"/>
</dbReference>
<dbReference type="GO" id="GO:0019148">
    <property type="term" value="F:D-cysteine desulfhydrase activity"/>
    <property type="evidence" value="ECO:0007669"/>
    <property type="project" value="UniProtKB-UniRule"/>
</dbReference>
<dbReference type="GO" id="GO:0046416">
    <property type="term" value="P:D-amino acid metabolic process"/>
    <property type="evidence" value="ECO:0007669"/>
    <property type="project" value="UniProtKB-UniRule"/>
</dbReference>
<dbReference type="CDD" id="cd06449">
    <property type="entry name" value="ACCD"/>
    <property type="match status" value="1"/>
</dbReference>
<dbReference type="FunFam" id="3.40.50.1100:FF:000019">
    <property type="entry name" value="D-cysteine desulfhydrase"/>
    <property type="match status" value="1"/>
</dbReference>
<dbReference type="Gene3D" id="3.40.50.1100">
    <property type="match status" value="2"/>
</dbReference>
<dbReference type="HAMAP" id="MF_01045">
    <property type="entry name" value="D_Cys_desulfhydr"/>
    <property type="match status" value="1"/>
</dbReference>
<dbReference type="InterPro" id="IPR027278">
    <property type="entry name" value="ACCD_DCysDesulf"/>
</dbReference>
<dbReference type="InterPro" id="IPR005966">
    <property type="entry name" value="D-Cys_desShydrase"/>
</dbReference>
<dbReference type="InterPro" id="IPR023702">
    <property type="entry name" value="D_Cys_desulphydr_bac"/>
</dbReference>
<dbReference type="InterPro" id="IPR001926">
    <property type="entry name" value="TrpB-like_PALP"/>
</dbReference>
<dbReference type="InterPro" id="IPR036052">
    <property type="entry name" value="TrpB-like_PALP_sf"/>
</dbReference>
<dbReference type="NCBIfam" id="TIGR01275">
    <property type="entry name" value="ACC_deam_rel"/>
    <property type="match status" value="1"/>
</dbReference>
<dbReference type="NCBIfam" id="NF003029">
    <property type="entry name" value="PRK03910.1-1"/>
    <property type="match status" value="1"/>
</dbReference>
<dbReference type="NCBIfam" id="NF003030">
    <property type="entry name" value="PRK03910.1-3"/>
    <property type="match status" value="1"/>
</dbReference>
<dbReference type="NCBIfam" id="NF003032">
    <property type="entry name" value="PRK03910.1-5"/>
    <property type="match status" value="1"/>
</dbReference>
<dbReference type="PANTHER" id="PTHR43780">
    <property type="entry name" value="1-AMINOCYCLOPROPANE-1-CARBOXYLATE DEAMINASE-RELATED"/>
    <property type="match status" value="1"/>
</dbReference>
<dbReference type="PANTHER" id="PTHR43780:SF2">
    <property type="entry name" value="1-AMINOCYCLOPROPANE-1-CARBOXYLATE DEAMINASE-RELATED"/>
    <property type="match status" value="1"/>
</dbReference>
<dbReference type="Pfam" id="PF00291">
    <property type="entry name" value="PALP"/>
    <property type="match status" value="1"/>
</dbReference>
<dbReference type="PIRSF" id="PIRSF006278">
    <property type="entry name" value="ACCD_DCysDesulf"/>
    <property type="match status" value="1"/>
</dbReference>
<dbReference type="SUPFAM" id="SSF53686">
    <property type="entry name" value="Tryptophan synthase beta subunit-like PLP-dependent enzymes"/>
    <property type="match status" value="1"/>
</dbReference>
<organism>
    <name type="scientific">Salmonella choleraesuis (strain SC-B67)</name>
    <dbReference type="NCBI Taxonomy" id="321314"/>
    <lineage>
        <taxon>Bacteria</taxon>
        <taxon>Pseudomonadati</taxon>
        <taxon>Pseudomonadota</taxon>
        <taxon>Gammaproteobacteria</taxon>
        <taxon>Enterobacterales</taxon>
        <taxon>Enterobacteriaceae</taxon>
        <taxon>Salmonella</taxon>
    </lineage>
</organism>
<feature type="chain" id="PRO_1000064264" description="D-cysteine desulfhydrase">
    <location>
        <begin position="1"/>
        <end position="328"/>
    </location>
</feature>
<feature type="modified residue" description="N6-(pyridoxal phosphate)lysine" evidence="1">
    <location>
        <position position="51"/>
    </location>
</feature>
<protein>
    <recommendedName>
        <fullName evidence="1">D-cysteine desulfhydrase</fullName>
        <ecNumber evidence="1">4.4.1.15</ecNumber>
    </recommendedName>
</protein>
<reference key="1">
    <citation type="journal article" date="2005" name="Nucleic Acids Res.">
        <title>The genome sequence of Salmonella enterica serovar Choleraesuis, a highly invasive and resistant zoonotic pathogen.</title>
        <authorList>
            <person name="Chiu C.-H."/>
            <person name="Tang P."/>
            <person name="Chu C."/>
            <person name="Hu S."/>
            <person name="Bao Q."/>
            <person name="Yu J."/>
            <person name="Chou Y.-Y."/>
            <person name="Wang H.-S."/>
            <person name="Lee Y.-S."/>
        </authorList>
    </citation>
    <scope>NUCLEOTIDE SEQUENCE [LARGE SCALE GENOMIC DNA]</scope>
    <source>
        <strain>SC-B67</strain>
    </source>
</reference>
<proteinExistence type="inferred from homology"/>
<comment type="function">
    <text evidence="1">Catalyzes the alpha,beta-elimination reaction of D-cysteine and of several D-cysteine derivatives. It could be a defense mechanism against D-cysteine.</text>
</comment>
<comment type="catalytic activity">
    <reaction evidence="1">
        <text>D-cysteine + H2O = hydrogen sulfide + pyruvate + NH4(+) + H(+)</text>
        <dbReference type="Rhea" id="RHEA:11268"/>
        <dbReference type="ChEBI" id="CHEBI:15361"/>
        <dbReference type="ChEBI" id="CHEBI:15377"/>
        <dbReference type="ChEBI" id="CHEBI:15378"/>
        <dbReference type="ChEBI" id="CHEBI:28938"/>
        <dbReference type="ChEBI" id="CHEBI:29919"/>
        <dbReference type="ChEBI" id="CHEBI:35236"/>
        <dbReference type="EC" id="4.4.1.15"/>
    </reaction>
</comment>
<comment type="cofactor">
    <cofactor evidence="1">
        <name>pyridoxal 5'-phosphate</name>
        <dbReference type="ChEBI" id="CHEBI:597326"/>
    </cofactor>
</comment>
<comment type="subunit">
    <text evidence="1">Homodimer.</text>
</comment>
<comment type="similarity">
    <text evidence="1">Belongs to the ACC deaminase/D-cysteine desulfhydrase family.</text>
</comment>
<gene>
    <name evidence="1" type="primary">dcyD</name>
    <name type="ordered locus">SCH_1957</name>
</gene>
<accession>Q57N48</accession>
<sequence>MPLHHLTRFPRLELIGAPTPLEYLPRLSDYLGREIYIKRDDVTPIAMGGNKLRKLEFLVADALREGADTLITAGAIQSNHVRQTAAVAAKLGLHCVALLENPIGTTAENYLTNGNRLLLDLFNTQIEMCDALTDPDAQLQTLATRIEAQGFRPYVIPVGGSSALGAMGYVESALEIAQQCAEVVGLSSVVVASGSAGTHAGLAVGLEHLMPDVELIGVTVSRSVAEQKPRVISLQQAIAGQLALTATADIHLWDDYFAPGYGVPNDAGMEAVKLLASLEGVLLDPVYTGKAMAGLIDGISQKRFNDDGPILFIHTGGAPALFAYHPHV</sequence>
<name>DCYD_SALCH</name>